<gene>
    <name evidence="1" type="primary">panB</name>
    <name type="ordered locus">AHA_3538</name>
</gene>
<reference key="1">
    <citation type="journal article" date="2006" name="J. Bacteriol.">
        <title>Genome sequence of Aeromonas hydrophila ATCC 7966T: jack of all trades.</title>
        <authorList>
            <person name="Seshadri R."/>
            <person name="Joseph S.W."/>
            <person name="Chopra A.K."/>
            <person name="Sha J."/>
            <person name="Shaw J."/>
            <person name="Graf J."/>
            <person name="Haft D.H."/>
            <person name="Wu M."/>
            <person name="Ren Q."/>
            <person name="Rosovitz M.J."/>
            <person name="Madupu R."/>
            <person name="Tallon L."/>
            <person name="Kim M."/>
            <person name="Jin S."/>
            <person name="Vuong H."/>
            <person name="Stine O.C."/>
            <person name="Ali A."/>
            <person name="Horneman A.J."/>
            <person name="Heidelberg J.F."/>
        </authorList>
    </citation>
    <scope>NUCLEOTIDE SEQUENCE [LARGE SCALE GENOMIC DNA]</scope>
    <source>
        <strain>ATCC 7966 / DSM 30187 / BCRC 13018 / CCUG 14551 / JCM 1027 / KCTC 2358 / NCIMB 9240 / NCTC 8049</strain>
    </source>
</reference>
<proteinExistence type="inferred from homology"/>
<keyword id="KW-0963">Cytoplasm</keyword>
<keyword id="KW-0460">Magnesium</keyword>
<keyword id="KW-0479">Metal-binding</keyword>
<keyword id="KW-0566">Pantothenate biosynthesis</keyword>
<keyword id="KW-1185">Reference proteome</keyword>
<keyword id="KW-0808">Transferase</keyword>
<evidence type="ECO:0000255" key="1">
    <source>
        <dbReference type="HAMAP-Rule" id="MF_00156"/>
    </source>
</evidence>
<organism>
    <name type="scientific">Aeromonas hydrophila subsp. hydrophila (strain ATCC 7966 / DSM 30187 / BCRC 13018 / CCUG 14551 / JCM 1027 / KCTC 2358 / NCIMB 9240 / NCTC 8049)</name>
    <dbReference type="NCBI Taxonomy" id="380703"/>
    <lineage>
        <taxon>Bacteria</taxon>
        <taxon>Pseudomonadati</taxon>
        <taxon>Pseudomonadota</taxon>
        <taxon>Gammaproteobacteria</taxon>
        <taxon>Aeromonadales</taxon>
        <taxon>Aeromonadaceae</taxon>
        <taxon>Aeromonas</taxon>
    </lineage>
</organism>
<sequence length="264" mass="28702">MSKITTTNLLKMKQEGQRITAITAYDATFAKLFDDEGAHVLLIGDSLGMVLQGGQDTLGVSMDEMVYHTRCVVRGTTNALVVTDMPFMSYATPEQTYQNAARLMAAGARMVKMEGGDWLCDSIRHLTRNGVPVCGHLGLTPQSVHVFGGFKVQGRDEFQAQEIYRQALELQAAGIQLLVLECVPTSLAERISKALRIPVIGIGAGPATDGQILVMHDAFGITSGYVPKFTKNFLAETGDMRAAIRLYVKQVSEGTFPGPEHCFN</sequence>
<accession>A0KP07</accession>
<name>PANB_AERHH</name>
<protein>
    <recommendedName>
        <fullName evidence="1">3-methyl-2-oxobutanoate hydroxymethyltransferase</fullName>
        <ecNumber evidence="1">2.1.2.11</ecNumber>
    </recommendedName>
    <alternativeName>
        <fullName evidence="1">Ketopantoate hydroxymethyltransferase</fullName>
        <shortName evidence="1">KPHMT</shortName>
    </alternativeName>
</protein>
<comment type="function">
    <text evidence="1">Catalyzes the reversible reaction in which hydroxymethyl group from 5,10-methylenetetrahydrofolate is transferred onto alpha-ketoisovalerate to form ketopantoate.</text>
</comment>
<comment type="catalytic activity">
    <reaction evidence="1">
        <text>3-methyl-2-oxobutanoate + (6R)-5,10-methylene-5,6,7,8-tetrahydrofolate + H2O = 2-dehydropantoate + (6S)-5,6,7,8-tetrahydrofolate</text>
        <dbReference type="Rhea" id="RHEA:11824"/>
        <dbReference type="ChEBI" id="CHEBI:11561"/>
        <dbReference type="ChEBI" id="CHEBI:11851"/>
        <dbReference type="ChEBI" id="CHEBI:15377"/>
        <dbReference type="ChEBI" id="CHEBI:15636"/>
        <dbReference type="ChEBI" id="CHEBI:57453"/>
        <dbReference type="EC" id="2.1.2.11"/>
    </reaction>
</comment>
<comment type="cofactor">
    <cofactor evidence="1">
        <name>Mg(2+)</name>
        <dbReference type="ChEBI" id="CHEBI:18420"/>
    </cofactor>
    <text evidence="1">Binds 1 Mg(2+) ion per subunit.</text>
</comment>
<comment type="pathway">
    <text evidence="1">Cofactor biosynthesis; (R)-pantothenate biosynthesis; (R)-pantoate from 3-methyl-2-oxobutanoate: step 1/2.</text>
</comment>
<comment type="subunit">
    <text evidence="1">Homodecamer; pentamer of dimers.</text>
</comment>
<comment type="subcellular location">
    <subcellularLocation>
        <location evidence="1">Cytoplasm</location>
    </subcellularLocation>
</comment>
<comment type="similarity">
    <text evidence="1">Belongs to the PanB family.</text>
</comment>
<dbReference type="EC" id="2.1.2.11" evidence="1"/>
<dbReference type="EMBL" id="CP000462">
    <property type="protein sequence ID" value="ABK37379.1"/>
    <property type="molecule type" value="Genomic_DNA"/>
</dbReference>
<dbReference type="RefSeq" id="WP_011707281.1">
    <property type="nucleotide sequence ID" value="NC_008570.1"/>
</dbReference>
<dbReference type="RefSeq" id="YP_858008.1">
    <property type="nucleotide sequence ID" value="NC_008570.1"/>
</dbReference>
<dbReference type="SMR" id="A0KP07"/>
<dbReference type="STRING" id="380703.AHA_3538"/>
<dbReference type="EnsemblBacteria" id="ABK37379">
    <property type="protein sequence ID" value="ABK37379"/>
    <property type="gene ID" value="AHA_3538"/>
</dbReference>
<dbReference type="GeneID" id="4488710"/>
<dbReference type="KEGG" id="aha:AHA_3538"/>
<dbReference type="PATRIC" id="fig|380703.7.peg.3523"/>
<dbReference type="eggNOG" id="COG0413">
    <property type="taxonomic scope" value="Bacteria"/>
</dbReference>
<dbReference type="HOGENOM" id="CLU_036645_1_0_6"/>
<dbReference type="OrthoDB" id="9781789at2"/>
<dbReference type="UniPathway" id="UPA00028">
    <property type="reaction ID" value="UER00003"/>
</dbReference>
<dbReference type="Proteomes" id="UP000000756">
    <property type="component" value="Chromosome"/>
</dbReference>
<dbReference type="GO" id="GO:0005737">
    <property type="term" value="C:cytoplasm"/>
    <property type="evidence" value="ECO:0007669"/>
    <property type="project" value="UniProtKB-SubCell"/>
</dbReference>
<dbReference type="GO" id="GO:0003864">
    <property type="term" value="F:3-methyl-2-oxobutanoate hydroxymethyltransferase activity"/>
    <property type="evidence" value="ECO:0007669"/>
    <property type="project" value="UniProtKB-UniRule"/>
</dbReference>
<dbReference type="GO" id="GO:0000287">
    <property type="term" value="F:magnesium ion binding"/>
    <property type="evidence" value="ECO:0007669"/>
    <property type="project" value="TreeGrafter"/>
</dbReference>
<dbReference type="GO" id="GO:0015940">
    <property type="term" value="P:pantothenate biosynthetic process"/>
    <property type="evidence" value="ECO:0007669"/>
    <property type="project" value="UniProtKB-UniRule"/>
</dbReference>
<dbReference type="CDD" id="cd06557">
    <property type="entry name" value="KPHMT-like"/>
    <property type="match status" value="1"/>
</dbReference>
<dbReference type="FunFam" id="3.20.20.60:FF:000003">
    <property type="entry name" value="3-methyl-2-oxobutanoate hydroxymethyltransferase"/>
    <property type="match status" value="1"/>
</dbReference>
<dbReference type="Gene3D" id="3.20.20.60">
    <property type="entry name" value="Phosphoenolpyruvate-binding domains"/>
    <property type="match status" value="1"/>
</dbReference>
<dbReference type="HAMAP" id="MF_00156">
    <property type="entry name" value="PanB"/>
    <property type="match status" value="1"/>
</dbReference>
<dbReference type="InterPro" id="IPR003700">
    <property type="entry name" value="Pantoate_hydroxy_MeTrfase"/>
</dbReference>
<dbReference type="InterPro" id="IPR015813">
    <property type="entry name" value="Pyrv/PenolPyrv_kinase-like_dom"/>
</dbReference>
<dbReference type="InterPro" id="IPR040442">
    <property type="entry name" value="Pyrv_kinase-like_dom_sf"/>
</dbReference>
<dbReference type="NCBIfam" id="TIGR00222">
    <property type="entry name" value="panB"/>
    <property type="match status" value="1"/>
</dbReference>
<dbReference type="NCBIfam" id="NF001452">
    <property type="entry name" value="PRK00311.1"/>
    <property type="match status" value="1"/>
</dbReference>
<dbReference type="PANTHER" id="PTHR20881">
    <property type="entry name" value="3-METHYL-2-OXOBUTANOATE HYDROXYMETHYLTRANSFERASE"/>
    <property type="match status" value="1"/>
</dbReference>
<dbReference type="PANTHER" id="PTHR20881:SF0">
    <property type="entry name" value="3-METHYL-2-OXOBUTANOATE HYDROXYMETHYLTRANSFERASE"/>
    <property type="match status" value="1"/>
</dbReference>
<dbReference type="Pfam" id="PF02548">
    <property type="entry name" value="Pantoate_transf"/>
    <property type="match status" value="1"/>
</dbReference>
<dbReference type="PIRSF" id="PIRSF000388">
    <property type="entry name" value="Pantoate_hydroxy_MeTrfase"/>
    <property type="match status" value="1"/>
</dbReference>
<dbReference type="SUPFAM" id="SSF51621">
    <property type="entry name" value="Phosphoenolpyruvate/pyruvate domain"/>
    <property type="match status" value="1"/>
</dbReference>
<feature type="chain" id="PRO_0000297209" description="3-methyl-2-oxobutanoate hydroxymethyltransferase">
    <location>
        <begin position="1"/>
        <end position="264"/>
    </location>
</feature>
<feature type="active site" description="Proton acceptor" evidence="1">
    <location>
        <position position="181"/>
    </location>
</feature>
<feature type="binding site" evidence="1">
    <location>
        <begin position="45"/>
        <end position="46"/>
    </location>
    <ligand>
        <name>3-methyl-2-oxobutanoate</name>
        <dbReference type="ChEBI" id="CHEBI:11851"/>
    </ligand>
</feature>
<feature type="binding site" evidence="1">
    <location>
        <position position="45"/>
    </location>
    <ligand>
        <name>Mg(2+)</name>
        <dbReference type="ChEBI" id="CHEBI:18420"/>
    </ligand>
</feature>
<feature type="binding site" evidence="1">
    <location>
        <position position="84"/>
    </location>
    <ligand>
        <name>3-methyl-2-oxobutanoate</name>
        <dbReference type="ChEBI" id="CHEBI:11851"/>
    </ligand>
</feature>
<feature type="binding site" evidence="1">
    <location>
        <position position="84"/>
    </location>
    <ligand>
        <name>Mg(2+)</name>
        <dbReference type="ChEBI" id="CHEBI:18420"/>
    </ligand>
</feature>
<feature type="binding site" evidence="1">
    <location>
        <position position="112"/>
    </location>
    <ligand>
        <name>3-methyl-2-oxobutanoate</name>
        <dbReference type="ChEBI" id="CHEBI:11851"/>
    </ligand>
</feature>
<feature type="binding site" evidence="1">
    <location>
        <position position="114"/>
    </location>
    <ligand>
        <name>Mg(2+)</name>
        <dbReference type="ChEBI" id="CHEBI:18420"/>
    </ligand>
</feature>